<proteinExistence type="inferred from homology"/>
<comment type="catalytic activity">
    <reaction evidence="1">
        <text>uridine + ATP = UMP + ADP + H(+)</text>
        <dbReference type="Rhea" id="RHEA:16825"/>
        <dbReference type="ChEBI" id="CHEBI:15378"/>
        <dbReference type="ChEBI" id="CHEBI:16704"/>
        <dbReference type="ChEBI" id="CHEBI:30616"/>
        <dbReference type="ChEBI" id="CHEBI:57865"/>
        <dbReference type="ChEBI" id="CHEBI:456216"/>
        <dbReference type="EC" id="2.7.1.48"/>
    </reaction>
</comment>
<comment type="catalytic activity">
    <reaction evidence="1">
        <text>cytidine + ATP = CMP + ADP + H(+)</text>
        <dbReference type="Rhea" id="RHEA:24674"/>
        <dbReference type="ChEBI" id="CHEBI:15378"/>
        <dbReference type="ChEBI" id="CHEBI:17562"/>
        <dbReference type="ChEBI" id="CHEBI:30616"/>
        <dbReference type="ChEBI" id="CHEBI:60377"/>
        <dbReference type="ChEBI" id="CHEBI:456216"/>
        <dbReference type="EC" id="2.7.1.48"/>
    </reaction>
</comment>
<comment type="pathway">
    <text evidence="1">Pyrimidine metabolism; CTP biosynthesis via salvage pathway; CTP from cytidine: step 1/3.</text>
</comment>
<comment type="pathway">
    <text evidence="1">Pyrimidine metabolism; UMP biosynthesis via salvage pathway; UMP from uridine: step 1/1.</text>
</comment>
<comment type="subcellular location">
    <subcellularLocation>
        <location evidence="1">Cytoplasm</location>
    </subcellularLocation>
</comment>
<comment type="similarity">
    <text evidence="1">Belongs to the uridine kinase family.</text>
</comment>
<gene>
    <name evidence="1" type="primary">udk</name>
    <name type="ordered locus">LMOf2365_1516</name>
</gene>
<evidence type="ECO:0000255" key="1">
    <source>
        <dbReference type="HAMAP-Rule" id="MF_00551"/>
    </source>
</evidence>
<accession>Q71ZH3</accession>
<dbReference type="EC" id="2.7.1.48" evidence="1"/>
<dbReference type="EMBL" id="AE017262">
    <property type="protein sequence ID" value="AAT04291.1"/>
    <property type="molecule type" value="Genomic_DNA"/>
</dbReference>
<dbReference type="RefSeq" id="WP_003725973.1">
    <property type="nucleotide sequence ID" value="NC_002973.6"/>
</dbReference>
<dbReference type="SMR" id="Q71ZH3"/>
<dbReference type="KEGG" id="lmf:LMOf2365_1516"/>
<dbReference type="HOGENOM" id="CLU_021278_1_2_9"/>
<dbReference type="UniPathway" id="UPA00574">
    <property type="reaction ID" value="UER00637"/>
</dbReference>
<dbReference type="UniPathway" id="UPA00579">
    <property type="reaction ID" value="UER00640"/>
</dbReference>
<dbReference type="GO" id="GO:0005737">
    <property type="term" value="C:cytoplasm"/>
    <property type="evidence" value="ECO:0007669"/>
    <property type="project" value="UniProtKB-SubCell"/>
</dbReference>
<dbReference type="GO" id="GO:0005524">
    <property type="term" value="F:ATP binding"/>
    <property type="evidence" value="ECO:0007669"/>
    <property type="project" value="UniProtKB-UniRule"/>
</dbReference>
<dbReference type="GO" id="GO:0043771">
    <property type="term" value="F:cytidine kinase activity"/>
    <property type="evidence" value="ECO:0007669"/>
    <property type="project" value="RHEA"/>
</dbReference>
<dbReference type="GO" id="GO:0004849">
    <property type="term" value="F:uridine kinase activity"/>
    <property type="evidence" value="ECO:0007669"/>
    <property type="project" value="UniProtKB-UniRule"/>
</dbReference>
<dbReference type="GO" id="GO:0044211">
    <property type="term" value="P:CTP salvage"/>
    <property type="evidence" value="ECO:0007669"/>
    <property type="project" value="UniProtKB-UniRule"/>
</dbReference>
<dbReference type="GO" id="GO:0044206">
    <property type="term" value="P:UMP salvage"/>
    <property type="evidence" value="ECO:0007669"/>
    <property type="project" value="UniProtKB-UniRule"/>
</dbReference>
<dbReference type="CDD" id="cd02023">
    <property type="entry name" value="UMPK"/>
    <property type="match status" value="1"/>
</dbReference>
<dbReference type="Gene3D" id="3.40.50.300">
    <property type="entry name" value="P-loop containing nucleotide triphosphate hydrolases"/>
    <property type="match status" value="1"/>
</dbReference>
<dbReference type="HAMAP" id="MF_00551">
    <property type="entry name" value="Uridine_kinase"/>
    <property type="match status" value="1"/>
</dbReference>
<dbReference type="InterPro" id="IPR027417">
    <property type="entry name" value="P-loop_NTPase"/>
</dbReference>
<dbReference type="InterPro" id="IPR006083">
    <property type="entry name" value="PRK/URK"/>
</dbReference>
<dbReference type="InterPro" id="IPR026008">
    <property type="entry name" value="Uridine_kinase"/>
</dbReference>
<dbReference type="InterPro" id="IPR000764">
    <property type="entry name" value="Uridine_kinase-like"/>
</dbReference>
<dbReference type="NCBIfam" id="NF004018">
    <property type="entry name" value="PRK05480.1"/>
    <property type="match status" value="1"/>
</dbReference>
<dbReference type="NCBIfam" id="TIGR00235">
    <property type="entry name" value="udk"/>
    <property type="match status" value="1"/>
</dbReference>
<dbReference type="PANTHER" id="PTHR10285">
    <property type="entry name" value="URIDINE KINASE"/>
    <property type="match status" value="1"/>
</dbReference>
<dbReference type="Pfam" id="PF00485">
    <property type="entry name" value="PRK"/>
    <property type="match status" value="1"/>
</dbReference>
<dbReference type="PRINTS" id="PR00988">
    <property type="entry name" value="URIDINKINASE"/>
</dbReference>
<dbReference type="SUPFAM" id="SSF52540">
    <property type="entry name" value="P-loop containing nucleoside triphosphate hydrolases"/>
    <property type="match status" value="1"/>
</dbReference>
<sequence>MTKKPIVVGVTGGSGSGKTSVTKAICDHFSGHSILMIAQDVYYHDQANISFEDRLKVNYDHPLAFDTDLLISHIAALRRYETIEKPIYDYAKYTRKKEVEIQEPREVIILEGILILEDKRLRDLMDIKVYVDTDDDIRFIRRLLRDMKERGRTMDSVIEQYLSVVKPMHNEFIEPTKKFADIIIPEGGENHVAIDLMTTKIESILQKHV</sequence>
<reference key="1">
    <citation type="journal article" date="2004" name="Nucleic Acids Res.">
        <title>Whole genome comparisons of serotype 4b and 1/2a strains of the food-borne pathogen Listeria monocytogenes reveal new insights into the core genome components of this species.</title>
        <authorList>
            <person name="Nelson K.E."/>
            <person name="Fouts D.E."/>
            <person name="Mongodin E.F."/>
            <person name="Ravel J."/>
            <person name="DeBoy R.T."/>
            <person name="Kolonay J.F."/>
            <person name="Rasko D.A."/>
            <person name="Angiuoli S.V."/>
            <person name="Gill S.R."/>
            <person name="Paulsen I.T."/>
            <person name="Peterson J.D."/>
            <person name="White O."/>
            <person name="Nelson W.C."/>
            <person name="Nierman W.C."/>
            <person name="Beanan M.J."/>
            <person name="Brinkac L.M."/>
            <person name="Daugherty S.C."/>
            <person name="Dodson R.J."/>
            <person name="Durkin A.S."/>
            <person name="Madupu R."/>
            <person name="Haft D.H."/>
            <person name="Selengut J."/>
            <person name="Van Aken S.E."/>
            <person name="Khouri H.M."/>
            <person name="Fedorova N."/>
            <person name="Forberger H.A."/>
            <person name="Tran B."/>
            <person name="Kathariou S."/>
            <person name="Wonderling L.D."/>
            <person name="Uhlich G.A."/>
            <person name="Bayles D.O."/>
            <person name="Luchansky J.B."/>
            <person name="Fraser C.M."/>
        </authorList>
    </citation>
    <scope>NUCLEOTIDE SEQUENCE [LARGE SCALE GENOMIC DNA]</scope>
    <source>
        <strain>F2365</strain>
    </source>
</reference>
<feature type="chain" id="PRO_0000164478" description="Uridine kinase">
    <location>
        <begin position="1"/>
        <end position="209"/>
    </location>
</feature>
<feature type="binding site" evidence="1">
    <location>
        <begin position="12"/>
        <end position="19"/>
    </location>
    <ligand>
        <name>ATP</name>
        <dbReference type="ChEBI" id="CHEBI:30616"/>
    </ligand>
</feature>
<organism>
    <name type="scientific">Listeria monocytogenes serotype 4b (strain F2365)</name>
    <dbReference type="NCBI Taxonomy" id="265669"/>
    <lineage>
        <taxon>Bacteria</taxon>
        <taxon>Bacillati</taxon>
        <taxon>Bacillota</taxon>
        <taxon>Bacilli</taxon>
        <taxon>Bacillales</taxon>
        <taxon>Listeriaceae</taxon>
        <taxon>Listeria</taxon>
    </lineage>
</organism>
<keyword id="KW-0067">ATP-binding</keyword>
<keyword id="KW-0963">Cytoplasm</keyword>
<keyword id="KW-0418">Kinase</keyword>
<keyword id="KW-0547">Nucleotide-binding</keyword>
<keyword id="KW-0808">Transferase</keyword>
<protein>
    <recommendedName>
        <fullName evidence="1">Uridine kinase</fullName>
        <ecNumber evidence="1">2.7.1.48</ecNumber>
    </recommendedName>
    <alternativeName>
        <fullName evidence="1">Cytidine monophosphokinase</fullName>
    </alternativeName>
    <alternativeName>
        <fullName evidence="1">Uridine monophosphokinase</fullName>
    </alternativeName>
</protein>
<name>URK_LISMF</name>